<proteinExistence type="inferred from homology"/>
<evidence type="ECO:0000255" key="1">
    <source>
        <dbReference type="HAMAP-Rule" id="MF_00188"/>
    </source>
</evidence>
<accession>Q03T13</accession>
<dbReference type="EC" id="3.4.24.-" evidence="1"/>
<dbReference type="EMBL" id="CP000416">
    <property type="protein sequence ID" value="ABJ63659.1"/>
    <property type="molecule type" value="Genomic_DNA"/>
</dbReference>
<dbReference type="RefSeq" id="WP_011667285.1">
    <property type="nucleotide sequence ID" value="NC_008497.1"/>
</dbReference>
<dbReference type="STRING" id="387344.LVIS_0501"/>
<dbReference type="KEGG" id="lbr:LVIS_0501"/>
<dbReference type="eggNOG" id="COG0501">
    <property type="taxonomic scope" value="Bacteria"/>
</dbReference>
<dbReference type="HOGENOM" id="CLU_042266_2_1_9"/>
<dbReference type="Proteomes" id="UP000001652">
    <property type="component" value="Chromosome"/>
</dbReference>
<dbReference type="GO" id="GO:0005886">
    <property type="term" value="C:plasma membrane"/>
    <property type="evidence" value="ECO:0007669"/>
    <property type="project" value="UniProtKB-SubCell"/>
</dbReference>
<dbReference type="GO" id="GO:0004222">
    <property type="term" value="F:metalloendopeptidase activity"/>
    <property type="evidence" value="ECO:0007669"/>
    <property type="project" value="UniProtKB-UniRule"/>
</dbReference>
<dbReference type="GO" id="GO:0008270">
    <property type="term" value="F:zinc ion binding"/>
    <property type="evidence" value="ECO:0007669"/>
    <property type="project" value="UniProtKB-UniRule"/>
</dbReference>
<dbReference type="GO" id="GO:0006508">
    <property type="term" value="P:proteolysis"/>
    <property type="evidence" value="ECO:0007669"/>
    <property type="project" value="UniProtKB-KW"/>
</dbReference>
<dbReference type="CDD" id="cd07340">
    <property type="entry name" value="M48B_Htpx_like"/>
    <property type="match status" value="1"/>
</dbReference>
<dbReference type="Gene3D" id="3.30.2010.10">
    <property type="entry name" value="Metalloproteases ('zincins'), catalytic domain"/>
    <property type="match status" value="1"/>
</dbReference>
<dbReference type="HAMAP" id="MF_00188">
    <property type="entry name" value="Pept_M48_protease_HtpX"/>
    <property type="match status" value="1"/>
</dbReference>
<dbReference type="InterPro" id="IPR050083">
    <property type="entry name" value="HtpX_protease"/>
</dbReference>
<dbReference type="InterPro" id="IPR022919">
    <property type="entry name" value="Pept_M48_protease_HtpX"/>
</dbReference>
<dbReference type="InterPro" id="IPR001915">
    <property type="entry name" value="Peptidase_M48"/>
</dbReference>
<dbReference type="NCBIfam" id="NF003425">
    <property type="entry name" value="PRK04897.1"/>
    <property type="match status" value="1"/>
</dbReference>
<dbReference type="PANTHER" id="PTHR43221">
    <property type="entry name" value="PROTEASE HTPX"/>
    <property type="match status" value="1"/>
</dbReference>
<dbReference type="PANTHER" id="PTHR43221:SF1">
    <property type="entry name" value="PROTEASE HTPX"/>
    <property type="match status" value="1"/>
</dbReference>
<dbReference type="Pfam" id="PF01435">
    <property type="entry name" value="Peptidase_M48"/>
    <property type="match status" value="1"/>
</dbReference>
<gene>
    <name evidence="1" type="primary">htpX</name>
    <name type="ordered locus">LVIS_0501</name>
</gene>
<feature type="chain" id="PRO_1000020878" description="Protease HtpX homolog">
    <location>
        <begin position="1"/>
        <end position="298"/>
    </location>
</feature>
<feature type="transmembrane region" description="Helical" evidence="1">
    <location>
        <begin position="16"/>
        <end position="36"/>
    </location>
</feature>
<feature type="transmembrane region" description="Helical" evidence="1">
    <location>
        <begin position="38"/>
        <end position="58"/>
    </location>
</feature>
<feature type="transmembrane region" description="Helical" evidence="1">
    <location>
        <begin position="159"/>
        <end position="179"/>
    </location>
</feature>
<feature type="transmembrane region" description="Helical" evidence="1">
    <location>
        <begin position="197"/>
        <end position="217"/>
    </location>
</feature>
<feature type="active site" evidence="1">
    <location>
        <position position="145"/>
    </location>
</feature>
<feature type="binding site" evidence="1">
    <location>
        <position position="144"/>
    </location>
    <ligand>
        <name>Zn(2+)</name>
        <dbReference type="ChEBI" id="CHEBI:29105"/>
        <note>catalytic</note>
    </ligand>
</feature>
<feature type="binding site" evidence="1">
    <location>
        <position position="148"/>
    </location>
    <ligand>
        <name>Zn(2+)</name>
        <dbReference type="ChEBI" id="CHEBI:29105"/>
        <note>catalytic</note>
    </ligand>
</feature>
<feature type="binding site" evidence="1">
    <location>
        <position position="226"/>
    </location>
    <ligand>
        <name>Zn(2+)</name>
        <dbReference type="ChEBI" id="CHEBI:29105"/>
        <note>catalytic</note>
    </ligand>
</feature>
<comment type="cofactor">
    <cofactor evidence="1">
        <name>Zn(2+)</name>
        <dbReference type="ChEBI" id="CHEBI:29105"/>
    </cofactor>
    <text evidence="1">Binds 1 zinc ion per subunit.</text>
</comment>
<comment type="subcellular location">
    <subcellularLocation>
        <location evidence="1">Cell membrane</location>
        <topology evidence="1">Multi-pass membrane protein</topology>
    </subcellularLocation>
</comment>
<comment type="similarity">
    <text evidence="1">Belongs to the peptidase M48B family.</text>
</comment>
<organism>
    <name type="scientific">Levilactobacillus brevis (strain ATCC 367 / BCRC 12310 / CIP 105137 / JCM 1170 / LMG 11437 / NCIMB 947 / NCTC 947)</name>
    <name type="common">Lactobacillus brevis</name>
    <dbReference type="NCBI Taxonomy" id="387344"/>
    <lineage>
        <taxon>Bacteria</taxon>
        <taxon>Bacillati</taxon>
        <taxon>Bacillota</taxon>
        <taxon>Bacilli</taxon>
        <taxon>Lactobacillales</taxon>
        <taxon>Lactobacillaceae</taxon>
        <taxon>Levilactobacillus</taxon>
    </lineage>
</organism>
<reference key="1">
    <citation type="journal article" date="2006" name="Proc. Natl. Acad. Sci. U.S.A.">
        <title>Comparative genomics of the lactic acid bacteria.</title>
        <authorList>
            <person name="Makarova K.S."/>
            <person name="Slesarev A."/>
            <person name="Wolf Y.I."/>
            <person name="Sorokin A."/>
            <person name="Mirkin B."/>
            <person name="Koonin E.V."/>
            <person name="Pavlov A."/>
            <person name="Pavlova N."/>
            <person name="Karamychev V."/>
            <person name="Polouchine N."/>
            <person name="Shakhova V."/>
            <person name="Grigoriev I."/>
            <person name="Lou Y."/>
            <person name="Rohksar D."/>
            <person name="Lucas S."/>
            <person name="Huang K."/>
            <person name="Goodstein D.M."/>
            <person name="Hawkins T."/>
            <person name="Plengvidhya V."/>
            <person name="Welker D."/>
            <person name="Hughes J."/>
            <person name="Goh Y."/>
            <person name="Benson A."/>
            <person name="Baldwin K."/>
            <person name="Lee J.-H."/>
            <person name="Diaz-Muniz I."/>
            <person name="Dosti B."/>
            <person name="Smeianov V."/>
            <person name="Wechter W."/>
            <person name="Barabote R."/>
            <person name="Lorca G."/>
            <person name="Altermann E."/>
            <person name="Barrangou R."/>
            <person name="Ganesan B."/>
            <person name="Xie Y."/>
            <person name="Rawsthorne H."/>
            <person name="Tamir D."/>
            <person name="Parker C."/>
            <person name="Breidt F."/>
            <person name="Broadbent J.R."/>
            <person name="Hutkins R."/>
            <person name="O'Sullivan D."/>
            <person name="Steele J."/>
            <person name="Unlu G."/>
            <person name="Saier M.H. Jr."/>
            <person name="Klaenhammer T."/>
            <person name="Richardson P."/>
            <person name="Kozyavkin S."/>
            <person name="Weimer B.C."/>
            <person name="Mills D.A."/>
        </authorList>
    </citation>
    <scope>NUCLEOTIDE SEQUENCE [LARGE SCALE GENOMIC DNA]</scope>
    <source>
        <strain>ATCC 367 / BCRC 12310 / CIP 105137 / JCM 1170 / LMG 11437 / NCIMB 947 / NCTC 947</strain>
    </source>
</reference>
<sequence>MLYDQIATNKRRTGYVMFGFGVLTLAIGAALGYLFWNSWVSGTVIAAVVAVVYMLIMISQSTNVVMSMNHAREIKDVSQAPQLWHLIEDMALVAQVPMPRVFIIDDPSPNAFATGNDPKHAAVAVTTGIMERLNREELEGVIGHEMSHVRNYDIRLQTIALALSAAIGLLVNFASNWFWWGGATRRRDDRDDSAGNIIGLVISIFLIILAPLAASIAQMALSRNREYLADASSVELTRNPQGLINALRKIDDSQPMKAADPNSAALYISDPFKHKQKFADLFATHPPIADRIARLEKM</sequence>
<name>HTPX_LEVBA</name>
<protein>
    <recommendedName>
        <fullName evidence="1">Protease HtpX homolog</fullName>
        <ecNumber evidence="1">3.4.24.-</ecNumber>
    </recommendedName>
</protein>
<keyword id="KW-1003">Cell membrane</keyword>
<keyword id="KW-0378">Hydrolase</keyword>
<keyword id="KW-0472">Membrane</keyword>
<keyword id="KW-0479">Metal-binding</keyword>
<keyword id="KW-0482">Metalloprotease</keyword>
<keyword id="KW-0645">Protease</keyword>
<keyword id="KW-1185">Reference proteome</keyword>
<keyword id="KW-0812">Transmembrane</keyword>
<keyword id="KW-1133">Transmembrane helix</keyword>
<keyword id="KW-0862">Zinc</keyword>